<dbReference type="EC" id="3.6.5.-" evidence="1"/>
<dbReference type="EMBL" id="CH476594">
    <property type="protein sequence ID" value="EAU39063.1"/>
    <property type="molecule type" value="Genomic_DNA"/>
</dbReference>
<dbReference type="RefSeq" id="XP_001210503.1">
    <property type="nucleotide sequence ID" value="XM_001210503.1"/>
</dbReference>
<dbReference type="SMR" id="Q0D0W7"/>
<dbReference type="STRING" id="341663.Q0D0W7"/>
<dbReference type="EnsemblFungi" id="EAU39063">
    <property type="protein sequence ID" value="EAU39063"/>
    <property type="gene ID" value="ATEG_00417"/>
</dbReference>
<dbReference type="GeneID" id="4355171"/>
<dbReference type="VEuPathDB" id="FungiDB:ATEG_00417"/>
<dbReference type="eggNOG" id="KOG2203">
    <property type="taxonomic scope" value="Eukaryota"/>
</dbReference>
<dbReference type="HOGENOM" id="CLU_011270_0_0_1"/>
<dbReference type="OMA" id="PIIKMTE"/>
<dbReference type="OrthoDB" id="1597724at2759"/>
<dbReference type="Proteomes" id="UP000007963">
    <property type="component" value="Unassembled WGS sequence"/>
</dbReference>
<dbReference type="GO" id="GO:0005789">
    <property type="term" value="C:endoplasmic reticulum membrane"/>
    <property type="evidence" value="ECO:0007669"/>
    <property type="project" value="UniProtKB-SubCell"/>
</dbReference>
<dbReference type="GO" id="GO:0005525">
    <property type="term" value="F:GTP binding"/>
    <property type="evidence" value="ECO:0007669"/>
    <property type="project" value="UniProtKB-UniRule"/>
</dbReference>
<dbReference type="GO" id="GO:0003924">
    <property type="term" value="F:GTPase activity"/>
    <property type="evidence" value="ECO:0007669"/>
    <property type="project" value="UniProtKB-UniRule"/>
</dbReference>
<dbReference type="GO" id="GO:0016320">
    <property type="term" value="P:endoplasmic reticulum membrane fusion"/>
    <property type="evidence" value="ECO:0007669"/>
    <property type="project" value="TreeGrafter"/>
</dbReference>
<dbReference type="CDD" id="cd01851">
    <property type="entry name" value="GBP"/>
    <property type="match status" value="1"/>
</dbReference>
<dbReference type="FunFam" id="3.40.50.300:FF:000727">
    <property type="entry name" value="Protein SEY1 homolog"/>
    <property type="match status" value="1"/>
</dbReference>
<dbReference type="Gene3D" id="3.40.50.300">
    <property type="entry name" value="P-loop containing nucleotide triphosphate hydrolases"/>
    <property type="match status" value="1"/>
</dbReference>
<dbReference type="HAMAP" id="MF_03109">
    <property type="entry name" value="Sey1"/>
    <property type="match status" value="1"/>
</dbReference>
<dbReference type="InterPro" id="IPR030386">
    <property type="entry name" value="G_GB1_RHD3_dom"/>
</dbReference>
<dbReference type="InterPro" id="IPR027417">
    <property type="entry name" value="P-loop_NTPase"/>
</dbReference>
<dbReference type="InterPro" id="IPR008803">
    <property type="entry name" value="RHD3/Sey1"/>
</dbReference>
<dbReference type="InterPro" id="IPR046758">
    <property type="entry name" value="Sey1/RHD3-like_3HB"/>
</dbReference>
<dbReference type="PANTHER" id="PTHR45923">
    <property type="entry name" value="PROTEIN SEY1"/>
    <property type="match status" value="1"/>
</dbReference>
<dbReference type="PANTHER" id="PTHR45923:SF2">
    <property type="entry name" value="PROTEIN SEY1"/>
    <property type="match status" value="1"/>
</dbReference>
<dbReference type="Pfam" id="PF05879">
    <property type="entry name" value="RHD3_GTPase"/>
    <property type="match status" value="1"/>
</dbReference>
<dbReference type="Pfam" id="PF20428">
    <property type="entry name" value="Sey1_3HB"/>
    <property type="match status" value="1"/>
</dbReference>
<dbReference type="SUPFAM" id="SSF52540">
    <property type="entry name" value="P-loop containing nucleoside triphosphate hydrolases"/>
    <property type="match status" value="1"/>
</dbReference>
<dbReference type="PROSITE" id="PS51715">
    <property type="entry name" value="G_GB1_RHD3"/>
    <property type="match status" value="1"/>
</dbReference>
<feature type="chain" id="PRO_0000384974" description="Protein sey1">
    <location>
        <begin position="1"/>
        <end position="854"/>
    </location>
</feature>
<feature type="topological domain" description="Cytoplasmic" evidence="1">
    <location>
        <begin position="1"/>
        <end position="741"/>
    </location>
</feature>
<feature type="transmembrane region" description="Helical" evidence="1">
    <location>
        <begin position="742"/>
        <end position="762"/>
    </location>
</feature>
<feature type="topological domain" description="Lumenal" evidence="1">
    <location>
        <begin position="763"/>
        <end position="765"/>
    </location>
</feature>
<feature type="transmembrane region" description="Helical" evidence="1">
    <location>
        <begin position="766"/>
        <end position="786"/>
    </location>
</feature>
<feature type="topological domain" description="Cytoplasmic" evidence="1">
    <location>
        <begin position="787"/>
        <end position="854"/>
    </location>
</feature>
<feature type="domain" description="GB1/RHD3-type G" evidence="2">
    <location>
        <begin position="50"/>
        <end position="299"/>
    </location>
</feature>
<feature type="region of interest" description="Disordered" evidence="3">
    <location>
        <begin position="668"/>
        <end position="695"/>
    </location>
</feature>
<feature type="region of interest" description="Disordered" evidence="3">
    <location>
        <begin position="824"/>
        <end position="854"/>
    </location>
</feature>
<feature type="coiled-coil region" evidence="1">
    <location>
        <begin position="474"/>
        <end position="500"/>
    </location>
</feature>
<feature type="coiled-coil region" evidence="1">
    <location>
        <begin position="695"/>
        <end position="715"/>
    </location>
</feature>
<feature type="compositionally biased region" description="Acidic residues" evidence="3">
    <location>
        <begin position="682"/>
        <end position="695"/>
    </location>
</feature>
<feature type="binding site" evidence="1">
    <location>
        <begin position="60"/>
        <end position="67"/>
    </location>
    <ligand>
        <name>GTP</name>
        <dbReference type="ChEBI" id="CHEBI:37565"/>
    </ligand>
</feature>
<accession>Q0D0W7</accession>
<reference key="1">
    <citation type="submission" date="2005-09" db="EMBL/GenBank/DDBJ databases">
        <title>Annotation of the Aspergillus terreus NIH2624 genome.</title>
        <authorList>
            <person name="Birren B.W."/>
            <person name="Lander E.S."/>
            <person name="Galagan J.E."/>
            <person name="Nusbaum C."/>
            <person name="Devon K."/>
            <person name="Henn M."/>
            <person name="Ma L.-J."/>
            <person name="Jaffe D.B."/>
            <person name="Butler J."/>
            <person name="Alvarez P."/>
            <person name="Gnerre S."/>
            <person name="Grabherr M."/>
            <person name="Kleber M."/>
            <person name="Mauceli E.W."/>
            <person name="Brockman W."/>
            <person name="Rounsley S."/>
            <person name="Young S.K."/>
            <person name="LaButti K."/>
            <person name="Pushparaj V."/>
            <person name="DeCaprio D."/>
            <person name="Crawford M."/>
            <person name="Koehrsen M."/>
            <person name="Engels R."/>
            <person name="Montgomery P."/>
            <person name="Pearson M."/>
            <person name="Howarth C."/>
            <person name="Larson L."/>
            <person name="Luoma S."/>
            <person name="White J."/>
            <person name="Alvarado L."/>
            <person name="Kodira C.D."/>
            <person name="Zeng Q."/>
            <person name="Oleary S."/>
            <person name="Yandava C."/>
            <person name="Denning D.W."/>
            <person name="Nierman W.C."/>
            <person name="Milne T."/>
            <person name="Madden K."/>
        </authorList>
    </citation>
    <scope>NUCLEOTIDE SEQUENCE [LARGE SCALE GENOMIC DNA]</scope>
    <source>
        <strain>NIH 2624 / FGSC A1156</strain>
    </source>
</reference>
<gene>
    <name type="primary">sey1</name>
    <name type="ORF">ATEG_00417</name>
</gene>
<protein>
    <recommendedName>
        <fullName evidence="1">Protein sey1</fullName>
        <ecNumber evidence="1">3.6.5.-</ecNumber>
    </recommendedName>
</protein>
<name>SEY1_ASPTN</name>
<evidence type="ECO:0000255" key="1">
    <source>
        <dbReference type="HAMAP-Rule" id="MF_03109"/>
    </source>
</evidence>
<evidence type="ECO:0000255" key="2">
    <source>
        <dbReference type="PROSITE-ProRule" id="PRU01052"/>
    </source>
</evidence>
<evidence type="ECO:0000256" key="3">
    <source>
        <dbReference type="SAM" id="MobiDB-lite"/>
    </source>
</evidence>
<organism>
    <name type="scientific">Aspergillus terreus (strain NIH 2624 / FGSC A1156)</name>
    <dbReference type="NCBI Taxonomy" id="341663"/>
    <lineage>
        <taxon>Eukaryota</taxon>
        <taxon>Fungi</taxon>
        <taxon>Dikarya</taxon>
        <taxon>Ascomycota</taxon>
        <taxon>Pezizomycotina</taxon>
        <taxon>Eurotiomycetes</taxon>
        <taxon>Eurotiomycetidae</taxon>
        <taxon>Eurotiales</taxon>
        <taxon>Aspergillaceae</taxon>
        <taxon>Aspergillus</taxon>
        <taxon>Aspergillus subgen. Circumdati</taxon>
    </lineage>
</organism>
<comment type="function">
    <text evidence="1">Cooperates with the reticulon proteins and tubule-shaping DP1 family proteins to generate and maintain the structure of the tubular endoplasmic reticulum network. Has GTPase activity, which is required for its function in ER organization.</text>
</comment>
<comment type="subcellular location">
    <subcellularLocation>
        <location evidence="1">Endoplasmic reticulum membrane</location>
        <topology evidence="1">Multi-pass membrane protein</topology>
    </subcellularLocation>
    <text evidence="1">Enriched in the cortical ER. Concentrated in punctae along the ER tubules.</text>
</comment>
<comment type="similarity">
    <text evidence="2">Belongs to the TRAFAC class dynamin-like GTPase superfamily. GB1/RHD3 GTPase family. RHD3 subfamily.</text>
</comment>
<proteinExistence type="inferred from homology"/>
<keyword id="KW-0175">Coiled coil</keyword>
<keyword id="KW-0256">Endoplasmic reticulum</keyword>
<keyword id="KW-0342">GTP-binding</keyword>
<keyword id="KW-0378">Hydrolase</keyword>
<keyword id="KW-0472">Membrane</keyword>
<keyword id="KW-0547">Nucleotide-binding</keyword>
<keyword id="KW-1185">Reference proteome</keyword>
<keyword id="KW-0812">Transmembrane</keyword>
<keyword id="KW-1133">Transmembrane helix</keyword>
<sequence length="854" mass="96095">MATNGHFASLGGDSSDKTAYEHGVQVIDENKEFNPNLSKYLSIEDVTPAGFNYHLISVFGSQSTGKSTLLNHLFGTRFSVMSELERRQTTKGIWMSKNKNTEGSMASNILVMDVEGTDGRERGEDQDFERKSALFALATSEVLIVNIWEHQVGLYQGANMGLLKTVFEVNLQLFLKDKNTTHRSLLFFVIRDFVGMTPLKNLQKTLMEDMSRLWDSISKPAGLEKSTVHDYFDFQFYGLPHKGYQPEQFVAETKKLSLRFREGHKDPSLDAQKGEFSDGGVFLPEYHRRIPADGFSRYAEGIWDQIVNNKDLDLPTQQELLAQFRCDEILREVMVAFDEAIVPFEDKQSQAARLGEPEILGGLGAAMRTARAKAVKSFETEASRYHKGVYQRKRAELESKIDTRLKALFQGQLNATHKSGINEFSDAVTTAVKSGQKKGTGYDFAEIVSEEVKKAMEKFEEVARTTTVEGTSWSDYSQELALYEKELAEVSARLRRDEMRRLATRVERWVQSRLGESVGLEFNALGSGRAGGGAPETGDKPTEKKFWDRVWNVFVETVLDAERRFTDRASSFDASLEEVDVGLWRLRRKSWGVLRAKIDEEMIEGNLLLKLRENFEDKFRYDDAGVPRIWRPTDDIEGVYTRARESTLTLIPLLSKFKLSETSAPPPLDRWVGHTPSSATAADEEDLPPIGGVDEEEGKSLEEEMTILSDSKRQELIVRFKKAADGVYVEAKRSAIGGMTQVPLYFYGILLALGWNEIIAVLRNPAYFFLLFVCAVAAYVTYQLNLWGPILKMTEAASNQALAEGKKRLREFLESSDTGRQAIAMSASGSEQHEMSRLNKQGKAAASDEDGDDL</sequence>